<proteinExistence type="inferred from homology"/>
<accession>A4JF74</accession>
<keyword id="KW-0963">Cytoplasm</keyword>
<keyword id="KW-0251">Elongation factor</keyword>
<keyword id="KW-0648">Protein biosynthesis</keyword>
<sequence>MAAITASMVAELRAKTDAPMMECKKALTEADGDLAKAEELLRVKLGNKASKAASRVTAEGVVASFVGGNAGALVELNCETDFVAKNDDFLAFSKTVAELVATQNPADVAALSALPLDGSTVDAVRLALIGKIGENVSIRRFVRFETANKIATYLHGARIGVIVEYTGAEEQVGKDVAMHIAAMKPVALSAADVPAELIDTERRVAEQKAAESGKPAEIVAKMVDGSVQKYLKEVSLLNQTFVKNDKQTIEQMLKAADAAVQKFALFVVGEGIEKRQDDFAAEVAAQVAAAKQQ</sequence>
<feature type="chain" id="PRO_1000006068" description="Elongation factor Ts">
    <location>
        <begin position="1"/>
        <end position="293"/>
    </location>
</feature>
<feature type="region of interest" description="Involved in Mg(2+) ion dislocation from EF-Tu" evidence="1">
    <location>
        <begin position="80"/>
        <end position="83"/>
    </location>
</feature>
<evidence type="ECO:0000255" key="1">
    <source>
        <dbReference type="HAMAP-Rule" id="MF_00050"/>
    </source>
</evidence>
<protein>
    <recommendedName>
        <fullName evidence="1">Elongation factor Ts</fullName>
        <shortName evidence="1">EF-Ts</shortName>
    </recommendedName>
</protein>
<name>EFTS_BURVG</name>
<reference key="1">
    <citation type="submission" date="2007-03" db="EMBL/GenBank/DDBJ databases">
        <title>Complete sequence of chromosome 1 of Burkholderia vietnamiensis G4.</title>
        <authorList>
            <consortium name="US DOE Joint Genome Institute"/>
            <person name="Copeland A."/>
            <person name="Lucas S."/>
            <person name="Lapidus A."/>
            <person name="Barry K."/>
            <person name="Detter J.C."/>
            <person name="Glavina del Rio T."/>
            <person name="Hammon N."/>
            <person name="Israni S."/>
            <person name="Dalin E."/>
            <person name="Tice H."/>
            <person name="Pitluck S."/>
            <person name="Chain P."/>
            <person name="Malfatti S."/>
            <person name="Shin M."/>
            <person name="Vergez L."/>
            <person name="Schmutz J."/>
            <person name="Larimer F."/>
            <person name="Land M."/>
            <person name="Hauser L."/>
            <person name="Kyrpides N."/>
            <person name="Tiedje J."/>
            <person name="Richardson P."/>
        </authorList>
    </citation>
    <scope>NUCLEOTIDE SEQUENCE [LARGE SCALE GENOMIC DNA]</scope>
    <source>
        <strain>G4 / LMG 22486</strain>
    </source>
</reference>
<organism>
    <name type="scientific">Burkholderia vietnamiensis (strain G4 / LMG 22486)</name>
    <name type="common">Burkholderia cepacia (strain R1808)</name>
    <dbReference type="NCBI Taxonomy" id="269482"/>
    <lineage>
        <taxon>Bacteria</taxon>
        <taxon>Pseudomonadati</taxon>
        <taxon>Pseudomonadota</taxon>
        <taxon>Betaproteobacteria</taxon>
        <taxon>Burkholderiales</taxon>
        <taxon>Burkholderiaceae</taxon>
        <taxon>Burkholderia</taxon>
        <taxon>Burkholderia cepacia complex</taxon>
    </lineage>
</organism>
<dbReference type="EMBL" id="CP000614">
    <property type="protein sequence ID" value="ABO54927.1"/>
    <property type="molecule type" value="Genomic_DNA"/>
</dbReference>
<dbReference type="SMR" id="A4JF74"/>
<dbReference type="KEGG" id="bvi:Bcep1808_1924"/>
<dbReference type="eggNOG" id="COG0264">
    <property type="taxonomic scope" value="Bacteria"/>
</dbReference>
<dbReference type="HOGENOM" id="CLU_047155_0_2_4"/>
<dbReference type="Proteomes" id="UP000002287">
    <property type="component" value="Chromosome 1"/>
</dbReference>
<dbReference type="GO" id="GO:0005737">
    <property type="term" value="C:cytoplasm"/>
    <property type="evidence" value="ECO:0007669"/>
    <property type="project" value="UniProtKB-SubCell"/>
</dbReference>
<dbReference type="GO" id="GO:0003746">
    <property type="term" value="F:translation elongation factor activity"/>
    <property type="evidence" value="ECO:0007669"/>
    <property type="project" value="UniProtKB-UniRule"/>
</dbReference>
<dbReference type="CDD" id="cd14275">
    <property type="entry name" value="UBA_EF-Ts"/>
    <property type="match status" value="1"/>
</dbReference>
<dbReference type="FunFam" id="1.10.286.20:FF:000001">
    <property type="entry name" value="Elongation factor Ts"/>
    <property type="match status" value="1"/>
</dbReference>
<dbReference type="FunFam" id="1.10.8.10:FF:000001">
    <property type="entry name" value="Elongation factor Ts"/>
    <property type="match status" value="1"/>
</dbReference>
<dbReference type="Gene3D" id="1.10.286.20">
    <property type="match status" value="1"/>
</dbReference>
<dbReference type="Gene3D" id="1.10.8.10">
    <property type="entry name" value="DNA helicase RuvA subunit, C-terminal domain"/>
    <property type="match status" value="1"/>
</dbReference>
<dbReference type="Gene3D" id="3.30.479.20">
    <property type="entry name" value="Elongation factor Ts, dimerisation domain"/>
    <property type="match status" value="2"/>
</dbReference>
<dbReference type="HAMAP" id="MF_00050">
    <property type="entry name" value="EF_Ts"/>
    <property type="match status" value="1"/>
</dbReference>
<dbReference type="InterPro" id="IPR036402">
    <property type="entry name" value="EF-Ts_dimer_sf"/>
</dbReference>
<dbReference type="InterPro" id="IPR001816">
    <property type="entry name" value="Transl_elong_EFTs/EF1B"/>
</dbReference>
<dbReference type="InterPro" id="IPR014039">
    <property type="entry name" value="Transl_elong_EFTs/EF1B_dimer"/>
</dbReference>
<dbReference type="InterPro" id="IPR018101">
    <property type="entry name" value="Transl_elong_Ts_CS"/>
</dbReference>
<dbReference type="InterPro" id="IPR009060">
    <property type="entry name" value="UBA-like_sf"/>
</dbReference>
<dbReference type="NCBIfam" id="TIGR00116">
    <property type="entry name" value="tsf"/>
    <property type="match status" value="1"/>
</dbReference>
<dbReference type="PANTHER" id="PTHR11741">
    <property type="entry name" value="ELONGATION FACTOR TS"/>
    <property type="match status" value="1"/>
</dbReference>
<dbReference type="PANTHER" id="PTHR11741:SF0">
    <property type="entry name" value="ELONGATION FACTOR TS, MITOCHONDRIAL"/>
    <property type="match status" value="1"/>
</dbReference>
<dbReference type="Pfam" id="PF00889">
    <property type="entry name" value="EF_TS"/>
    <property type="match status" value="1"/>
</dbReference>
<dbReference type="SUPFAM" id="SSF54713">
    <property type="entry name" value="Elongation factor Ts (EF-Ts), dimerisation domain"/>
    <property type="match status" value="2"/>
</dbReference>
<dbReference type="SUPFAM" id="SSF46934">
    <property type="entry name" value="UBA-like"/>
    <property type="match status" value="1"/>
</dbReference>
<dbReference type="PROSITE" id="PS01127">
    <property type="entry name" value="EF_TS_2"/>
    <property type="match status" value="1"/>
</dbReference>
<gene>
    <name evidence="1" type="primary">tsf</name>
    <name type="ordered locus">Bcep1808_1924</name>
</gene>
<comment type="function">
    <text evidence="1">Associates with the EF-Tu.GDP complex and induces the exchange of GDP to GTP. It remains bound to the aminoacyl-tRNA.EF-Tu.GTP complex up to the GTP hydrolysis stage on the ribosome.</text>
</comment>
<comment type="subcellular location">
    <subcellularLocation>
        <location evidence="1">Cytoplasm</location>
    </subcellularLocation>
</comment>
<comment type="similarity">
    <text evidence="1">Belongs to the EF-Ts family.</text>
</comment>